<sequence>MPTITSYFGFLLAASTITTALFIGLSKIRLI</sequence>
<reference key="1">
    <citation type="journal article" date="2005" name="Mol. Biol. Evol.">
        <title>Analysis of Acorus calamus chloroplast genome and its phylogenetic implications.</title>
        <authorList>
            <person name="Goremykin V.V."/>
            <person name="Holland B."/>
            <person name="Hirsch-Ernst K.I."/>
            <person name="Hellwig F.H."/>
        </authorList>
    </citation>
    <scope>NUCLEOTIDE SEQUENCE [LARGE SCALE GENOMIC DNA]</scope>
</reference>
<gene>
    <name evidence="1" type="primary">petL</name>
</gene>
<accession>Q3V517</accession>
<organism>
    <name type="scientific">Acorus calamus</name>
    <name type="common">Sweet flag</name>
    <dbReference type="NCBI Taxonomy" id="4465"/>
    <lineage>
        <taxon>Eukaryota</taxon>
        <taxon>Viridiplantae</taxon>
        <taxon>Streptophyta</taxon>
        <taxon>Embryophyta</taxon>
        <taxon>Tracheophyta</taxon>
        <taxon>Spermatophyta</taxon>
        <taxon>Magnoliopsida</taxon>
        <taxon>Liliopsida</taxon>
        <taxon>Acoraceae</taxon>
        <taxon>Acorus</taxon>
    </lineage>
</organism>
<feature type="chain" id="PRO_0000233669" description="Cytochrome b6-f complex subunit 6">
    <location>
        <begin position="1"/>
        <end position="31"/>
    </location>
</feature>
<feature type="transmembrane region" description="Helical" evidence="1">
    <location>
        <begin position="4"/>
        <end position="26"/>
    </location>
</feature>
<evidence type="ECO:0000255" key="1">
    <source>
        <dbReference type="HAMAP-Rule" id="MF_00433"/>
    </source>
</evidence>
<proteinExistence type="inferred from homology"/>
<geneLocation type="chloroplast"/>
<comment type="function">
    <text evidence="1">Component of the cytochrome b6-f complex, which mediates electron transfer between photosystem II (PSII) and photosystem I (PSI), cyclic electron flow around PSI, and state transitions. PetL is important for photoautotrophic growth as well as for electron transfer efficiency and stability of the cytochrome b6-f complex.</text>
</comment>
<comment type="subunit">
    <text evidence="1">The 4 large subunits of the cytochrome b6-f complex are cytochrome b6, subunit IV (17 kDa polypeptide, PetD), cytochrome f and the Rieske protein, while the 4 small subunits are PetG, PetL, PetM and PetN. The complex functions as a dimer.</text>
</comment>
<comment type="subcellular location">
    <subcellularLocation>
        <location evidence="1">Plastid</location>
        <location evidence="1">Chloroplast thylakoid membrane</location>
        <topology evidence="1">Single-pass membrane protein</topology>
    </subcellularLocation>
</comment>
<comment type="similarity">
    <text evidence="1">Belongs to the PetL family.</text>
</comment>
<keyword id="KW-0150">Chloroplast</keyword>
<keyword id="KW-0249">Electron transport</keyword>
<keyword id="KW-0472">Membrane</keyword>
<keyword id="KW-0602">Photosynthesis</keyword>
<keyword id="KW-0934">Plastid</keyword>
<keyword id="KW-0793">Thylakoid</keyword>
<keyword id="KW-0812">Transmembrane</keyword>
<keyword id="KW-1133">Transmembrane helix</keyword>
<keyword id="KW-0813">Transport</keyword>
<dbReference type="EMBL" id="AJ879453">
    <property type="protein sequence ID" value="CAI53811.1"/>
    <property type="molecule type" value="Genomic_DNA"/>
</dbReference>
<dbReference type="RefSeq" id="YP_319782.1">
    <property type="nucleotide sequence ID" value="NC_007407.1"/>
</dbReference>
<dbReference type="SMR" id="Q3V517"/>
<dbReference type="GeneID" id="3677493"/>
<dbReference type="GO" id="GO:0009535">
    <property type="term" value="C:chloroplast thylakoid membrane"/>
    <property type="evidence" value="ECO:0007669"/>
    <property type="project" value="UniProtKB-SubCell"/>
</dbReference>
<dbReference type="GO" id="GO:0009512">
    <property type="term" value="C:cytochrome b6f complex"/>
    <property type="evidence" value="ECO:0007669"/>
    <property type="project" value="InterPro"/>
</dbReference>
<dbReference type="GO" id="GO:0045158">
    <property type="term" value="F:electron transporter, transferring electrons within cytochrome b6/f complex of photosystem II activity"/>
    <property type="evidence" value="ECO:0007669"/>
    <property type="project" value="UniProtKB-UniRule"/>
</dbReference>
<dbReference type="GO" id="GO:0015979">
    <property type="term" value="P:photosynthesis"/>
    <property type="evidence" value="ECO:0007669"/>
    <property type="project" value="UniProtKB-KW"/>
</dbReference>
<dbReference type="HAMAP" id="MF_00433">
    <property type="entry name" value="Cytb6_f_PetL"/>
    <property type="match status" value="1"/>
</dbReference>
<dbReference type="InterPro" id="IPR007802">
    <property type="entry name" value="Cyt_b6/f_cplx_su6"/>
</dbReference>
<dbReference type="PANTHER" id="PTHR37266">
    <property type="entry name" value="CYTOCHROME B6-F COMPLEX SUBUNIT 6"/>
    <property type="match status" value="1"/>
</dbReference>
<dbReference type="PANTHER" id="PTHR37266:SF1">
    <property type="entry name" value="CYTOCHROME B6-F COMPLEX SUBUNIT 6"/>
    <property type="match status" value="1"/>
</dbReference>
<dbReference type="Pfam" id="PF05115">
    <property type="entry name" value="PetL"/>
    <property type="match status" value="1"/>
</dbReference>
<name>PETL_ACOCL</name>
<protein>
    <recommendedName>
        <fullName evidence="1">Cytochrome b6-f complex subunit 6</fullName>
    </recommendedName>
    <alternativeName>
        <fullName evidence="1">Cytochrome b6-f complex subunit PetL</fullName>
    </alternativeName>
    <alternativeName>
        <fullName evidence="1">Cytochrome b6-f complex subunit VI</fullName>
    </alternativeName>
</protein>